<reference key="1">
    <citation type="journal article" date="2009" name="BMC Genomics">
        <title>Complete genome sequence of the sugarcane nitrogen-fixing endophyte Gluconacetobacter diazotrophicus Pal5.</title>
        <authorList>
            <person name="Bertalan M."/>
            <person name="Albano R."/>
            <person name="de Padua V."/>
            <person name="Rouws L."/>
            <person name="Rojas C."/>
            <person name="Hemerly A."/>
            <person name="Teixeira K."/>
            <person name="Schwab S."/>
            <person name="Araujo J."/>
            <person name="Oliveira A."/>
            <person name="Franca L."/>
            <person name="Magalhaes V."/>
            <person name="Alqueres S."/>
            <person name="Cardoso A."/>
            <person name="Almeida W."/>
            <person name="Loureiro M.M."/>
            <person name="Nogueira E."/>
            <person name="Cidade D."/>
            <person name="Oliveira D."/>
            <person name="Simao T."/>
            <person name="Macedo J."/>
            <person name="Valadao A."/>
            <person name="Dreschsel M."/>
            <person name="Freitas F."/>
            <person name="Vidal M."/>
            <person name="Guedes H."/>
            <person name="Rodrigues E."/>
            <person name="Meneses C."/>
            <person name="Brioso P."/>
            <person name="Pozzer L."/>
            <person name="Figueiredo D."/>
            <person name="Montano H."/>
            <person name="Junior J."/>
            <person name="de Souza Filho G."/>
            <person name="Martin Quintana Flores V."/>
            <person name="Ferreira B."/>
            <person name="Branco A."/>
            <person name="Gonzalez P."/>
            <person name="Guillobel H."/>
            <person name="Lemos M."/>
            <person name="Seibel L."/>
            <person name="Macedo J."/>
            <person name="Alves-Ferreira M."/>
            <person name="Sachetto-Martins G."/>
            <person name="Coelho A."/>
            <person name="Santos E."/>
            <person name="Amaral G."/>
            <person name="Neves A."/>
            <person name="Pacheco A.B."/>
            <person name="Carvalho D."/>
            <person name="Lery L."/>
            <person name="Bisch P."/>
            <person name="Rossle S.C."/>
            <person name="Urmenyi T."/>
            <person name="Rael Pereira A."/>
            <person name="Silva R."/>
            <person name="Rondinelli E."/>
            <person name="von Kruger W."/>
            <person name="Martins O."/>
            <person name="Baldani J.I."/>
            <person name="Ferreira P.C."/>
        </authorList>
    </citation>
    <scope>NUCLEOTIDE SEQUENCE [LARGE SCALE GENOMIC DNA]</scope>
    <source>
        <strain>ATCC 49037 / DSM 5601 / CCUG 37298 / CIP 103539 / LMG 7603 / PAl5</strain>
    </source>
</reference>
<reference key="2">
    <citation type="journal article" date="2010" name="Stand. Genomic Sci.">
        <title>Two genome sequences of the same bacterial strain, Gluconacetobacter diazotrophicus PAl 5, suggest a new standard in genome sequence submission.</title>
        <authorList>
            <person name="Giongo A."/>
            <person name="Tyler H.L."/>
            <person name="Zipperer U.N."/>
            <person name="Triplett E.W."/>
        </authorList>
    </citation>
    <scope>NUCLEOTIDE SEQUENCE [LARGE SCALE GENOMIC DNA]</scope>
    <source>
        <strain>ATCC 49037 / DSM 5601 / CCUG 37298 / CIP 103539 / LMG 7603 / PAl5</strain>
    </source>
</reference>
<dbReference type="EC" id="2.6.1.9" evidence="1"/>
<dbReference type="EMBL" id="AM889285">
    <property type="protein sequence ID" value="CAP54225.1"/>
    <property type="molecule type" value="Genomic_DNA"/>
</dbReference>
<dbReference type="EMBL" id="CP001189">
    <property type="protein sequence ID" value="ACI52099.1"/>
    <property type="molecule type" value="Genomic_DNA"/>
</dbReference>
<dbReference type="RefSeq" id="WP_012222533.1">
    <property type="nucleotide sequence ID" value="NC_010125.1"/>
</dbReference>
<dbReference type="RefSeq" id="WP_012554264.1">
    <property type="nucleotide sequence ID" value="NC_011365.1"/>
</dbReference>
<dbReference type="SMR" id="A9H311"/>
<dbReference type="STRING" id="272568.GDI0282"/>
<dbReference type="KEGG" id="gdi:GDI0282"/>
<dbReference type="KEGG" id="gdj:Gdia_2345"/>
<dbReference type="eggNOG" id="COG0079">
    <property type="taxonomic scope" value="Bacteria"/>
</dbReference>
<dbReference type="HOGENOM" id="CLU_017584_3_0_5"/>
<dbReference type="OrthoDB" id="9809616at2"/>
<dbReference type="UniPathway" id="UPA00031">
    <property type="reaction ID" value="UER00012"/>
</dbReference>
<dbReference type="Proteomes" id="UP000001176">
    <property type="component" value="Chromosome"/>
</dbReference>
<dbReference type="GO" id="GO:0004400">
    <property type="term" value="F:histidinol-phosphate transaminase activity"/>
    <property type="evidence" value="ECO:0007669"/>
    <property type="project" value="UniProtKB-UniRule"/>
</dbReference>
<dbReference type="GO" id="GO:0030170">
    <property type="term" value="F:pyridoxal phosphate binding"/>
    <property type="evidence" value="ECO:0007669"/>
    <property type="project" value="InterPro"/>
</dbReference>
<dbReference type="GO" id="GO:0000105">
    <property type="term" value="P:L-histidine biosynthetic process"/>
    <property type="evidence" value="ECO:0007669"/>
    <property type="project" value="UniProtKB-UniRule"/>
</dbReference>
<dbReference type="CDD" id="cd00609">
    <property type="entry name" value="AAT_like"/>
    <property type="match status" value="1"/>
</dbReference>
<dbReference type="Gene3D" id="3.90.1150.10">
    <property type="entry name" value="Aspartate Aminotransferase, domain 1"/>
    <property type="match status" value="1"/>
</dbReference>
<dbReference type="Gene3D" id="3.40.640.10">
    <property type="entry name" value="Type I PLP-dependent aspartate aminotransferase-like (Major domain)"/>
    <property type="match status" value="1"/>
</dbReference>
<dbReference type="HAMAP" id="MF_01023">
    <property type="entry name" value="HisC_aminotrans_2"/>
    <property type="match status" value="1"/>
</dbReference>
<dbReference type="InterPro" id="IPR004839">
    <property type="entry name" value="Aminotransferase_I/II_large"/>
</dbReference>
<dbReference type="InterPro" id="IPR005861">
    <property type="entry name" value="HisP_aminotrans"/>
</dbReference>
<dbReference type="InterPro" id="IPR050106">
    <property type="entry name" value="HistidinolP_aminotransfase"/>
</dbReference>
<dbReference type="InterPro" id="IPR015424">
    <property type="entry name" value="PyrdxlP-dep_Trfase"/>
</dbReference>
<dbReference type="InterPro" id="IPR015421">
    <property type="entry name" value="PyrdxlP-dep_Trfase_major"/>
</dbReference>
<dbReference type="InterPro" id="IPR015422">
    <property type="entry name" value="PyrdxlP-dep_Trfase_small"/>
</dbReference>
<dbReference type="NCBIfam" id="TIGR01141">
    <property type="entry name" value="hisC"/>
    <property type="match status" value="1"/>
</dbReference>
<dbReference type="PANTHER" id="PTHR43643:SF3">
    <property type="entry name" value="HISTIDINOL-PHOSPHATE AMINOTRANSFERASE"/>
    <property type="match status" value="1"/>
</dbReference>
<dbReference type="PANTHER" id="PTHR43643">
    <property type="entry name" value="HISTIDINOL-PHOSPHATE AMINOTRANSFERASE 2"/>
    <property type="match status" value="1"/>
</dbReference>
<dbReference type="Pfam" id="PF00155">
    <property type="entry name" value="Aminotran_1_2"/>
    <property type="match status" value="1"/>
</dbReference>
<dbReference type="SUPFAM" id="SSF53383">
    <property type="entry name" value="PLP-dependent transferases"/>
    <property type="match status" value="1"/>
</dbReference>
<protein>
    <recommendedName>
        <fullName evidence="1">Histidinol-phosphate aminotransferase</fullName>
        <ecNumber evidence="1">2.6.1.9</ecNumber>
    </recommendedName>
    <alternativeName>
        <fullName evidence="1">Imidazole acetol-phosphate transaminase</fullName>
    </alternativeName>
</protein>
<proteinExistence type="inferred from homology"/>
<feature type="chain" id="PRO_1000084195" description="Histidinol-phosphate aminotransferase">
    <location>
        <begin position="1"/>
        <end position="356"/>
    </location>
</feature>
<feature type="modified residue" description="N6-(pyridoxal phosphate)lysine" evidence="1">
    <location>
        <position position="210"/>
    </location>
</feature>
<feature type="sequence conflict" description="In Ref. 2; ACI52099." evidence="2" ref="2">
    <original>A</original>
    <variation>G</variation>
    <location>
        <position position="315"/>
    </location>
</feature>
<gene>
    <name evidence="1" type="primary">hisC</name>
    <name type="ordered locus">GDI0282</name>
    <name type="ordered locus">Gdia_2345</name>
</gene>
<organism>
    <name type="scientific">Gluconacetobacter diazotrophicus (strain ATCC 49037 / DSM 5601 / CCUG 37298 / CIP 103539 / LMG 7603 / PAl5)</name>
    <dbReference type="NCBI Taxonomy" id="272568"/>
    <lineage>
        <taxon>Bacteria</taxon>
        <taxon>Pseudomonadati</taxon>
        <taxon>Pseudomonadota</taxon>
        <taxon>Alphaproteobacteria</taxon>
        <taxon>Acetobacterales</taxon>
        <taxon>Acetobacteraceae</taxon>
        <taxon>Gluconacetobacter</taxon>
    </lineage>
</organism>
<comment type="catalytic activity">
    <reaction evidence="1">
        <text>L-histidinol phosphate + 2-oxoglutarate = 3-(imidazol-4-yl)-2-oxopropyl phosphate + L-glutamate</text>
        <dbReference type="Rhea" id="RHEA:23744"/>
        <dbReference type="ChEBI" id="CHEBI:16810"/>
        <dbReference type="ChEBI" id="CHEBI:29985"/>
        <dbReference type="ChEBI" id="CHEBI:57766"/>
        <dbReference type="ChEBI" id="CHEBI:57980"/>
        <dbReference type="EC" id="2.6.1.9"/>
    </reaction>
</comment>
<comment type="cofactor">
    <cofactor evidence="1">
        <name>pyridoxal 5'-phosphate</name>
        <dbReference type="ChEBI" id="CHEBI:597326"/>
    </cofactor>
</comment>
<comment type="pathway">
    <text evidence="1">Amino-acid biosynthesis; L-histidine biosynthesis; L-histidine from 5-phospho-alpha-D-ribose 1-diphosphate: step 7/9.</text>
</comment>
<comment type="subunit">
    <text evidence="1">Homodimer.</text>
</comment>
<comment type="similarity">
    <text evidence="1">Belongs to the class-II pyridoxal-phosphate-dependent aminotransferase family. Histidinol-phosphate aminotransferase subfamily.</text>
</comment>
<name>HIS8_GLUDA</name>
<keyword id="KW-0028">Amino-acid biosynthesis</keyword>
<keyword id="KW-0032">Aminotransferase</keyword>
<keyword id="KW-0368">Histidine biosynthesis</keyword>
<keyword id="KW-0663">Pyridoxal phosphate</keyword>
<keyword id="KW-1185">Reference proteome</keyword>
<keyword id="KW-0808">Transferase</keyword>
<evidence type="ECO:0000255" key="1">
    <source>
        <dbReference type="HAMAP-Rule" id="MF_01023"/>
    </source>
</evidence>
<evidence type="ECO:0000305" key="2"/>
<accession>A9H311</accession>
<accession>B5ZF55</accession>
<sequence>MSRFWSPVVHRLTPYVPGEQPKLTNLIKLNTNESPYGPPPGALEAIRAAADDTLRLYSDPTSERLRAAIAQAHDVGMDEIFVGNGSDEVLAHAFHALLQHDAPLLTPDITYSFYPVYCGLYGIAHQPVPLDDAMRIDVDDYRRPCAGLVLPNPNAPTGIALGLGQIETLLRAQPDRVVVIDEAYVDFGADTAIPLVRRFPNLLVVRTLSKSHALAGLRVGYAIGHPDLVEALNRVKDSFNSYPLDRLAQAGAAAAIADREWLARTTGKIIKTRIGLTSSLRGLGFEVLPSQANFVFARHPDRDAAHLAAALRERAIIVRHFRTPRIAEWLRITVGTDEECRVLTDALGTILTRNAD</sequence>